<proteinExistence type="inferred from homology"/>
<reference key="1">
    <citation type="submission" date="2008-06" db="EMBL/GenBank/DDBJ databases">
        <title>Complete sequence of Pelodictyon phaeoclathratiforme BU-1.</title>
        <authorList>
            <consortium name="US DOE Joint Genome Institute"/>
            <person name="Lucas S."/>
            <person name="Copeland A."/>
            <person name="Lapidus A."/>
            <person name="Glavina del Rio T."/>
            <person name="Dalin E."/>
            <person name="Tice H."/>
            <person name="Bruce D."/>
            <person name="Goodwin L."/>
            <person name="Pitluck S."/>
            <person name="Schmutz J."/>
            <person name="Larimer F."/>
            <person name="Land M."/>
            <person name="Hauser L."/>
            <person name="Kyrpides N."/>
            <person name="Mikhailova N."/>
            <person name="Liu Z."/>
            <person name="Li T."/>
            <person name="Zhao F."/>
            <person name="Overmann J."/>
            <person name="Bryant D.A."/>
            <person name="Richardson P."/>
        </authorList>
    </citation>
    <scope>NUCLEOTIDE SEQUENCE [LARGE SCALE GENOMIC DNA]</scope>
    <source>
        <strain>DSM 5477 / BU-1</strain>
    </source>
</reference>
<protein>
    <recommendedName>
        <fullName evidence="1">Ribosome-binding factor A</fullName>
    </recommendedName>
</protein>
<feature type="chain" id="PRO_1000088912" description="Ribosome-binding factor A">
    <location>
        <begin position="1"/>
        <end position="119"/>
    </location>
</feature>
<evidence type="ECO:0000255" key="1">
    <source>
        <dbReference type="HAMAP-Rule" id="MF_00003"/>
    </source>
</evidence>
<keyword id="KW-0963">Cytoplasm</keyword>
<keyword id="KW-1185">Reference proteome</keyword>
<keyword id="KW-0690">Ribosome biogenesis</keyword>
<name>RBFA_PELPB</name>
<gene>
    <name evidence="1" type="primary">rbfA</name>
    <name type="ordered locus">Ppha_0399</name>
</gene>
<accession>B4SCE8</accession>
<comment type="function">
    <text evidence="1">One of several proteins that assist in the late maturation steps of the functional core of the 30S ribosomal subunit. Associates with free 30S ribosomal subunits (but not with 30S subunits that are part of 70S ribosomes or polysomes). Required for efficient processing of 16S rRNA. May interact with the 5'-terminal helix region of 16S rRNA.</text>
</comment>
<comment type="subunit">
    <text evidence="1">Monomer. Binds 30S ribosomal subunits, but not 50S ribosomal subunits or 70S ribosomes.</text>
</comment>
<comment type="subcellular location">
    <subcellularLocation>
        <location evidence="1">Cytoplasm</location>
    </subcellularLocation>
</comment>
<comment type="similarity">
    <text evidence="1">Belongs to the RbfA family.</text>
</comment>
<dbReference type="EMBL" id="CP001110">
    <property type="protein sequence ID" value="ACF42728.1"/>
    <property type="molecule type" value="Genomic_DNA"/>
</dbReference>
<dbReference type="RefSeq" id="WP_012507223.1">
    <property type="nucleotide sequence ID" value="NC_011060.1"/>
</dbReference>
<dbReference type="SMR" id="B4SCE8"/>
<dbReference type="STRING" id="324925.Ppha_0399"/>
<dbReference type="KEGG" id="pph:Ppha_0399"/>
<dbReference type="eggNOG" id="COG0858">
    <property type="taxonomic scope" value="Bacteria"/>
</dbReference>
<dbReference type="HOGENOM" id="CLU_089475_4_0_10"/>
<dbReference type="OrthoDB" id="9811910at2"/>
<dbReference type="Proteomes" id="UP000002724">
    <property type="component" value="Chromosome"/>
</dbReference>
<dbReference type="GO" id="GO:0005829">
    <property type="term" value="C:cytosol"/>
    <property type="evidence" value="ECO:0007669"/>
    <property type="project" value="TreeGrafter"/>
</dbReference>
<dbReference type="GO" id="GO:0043024">
    <property type="term" value="F:ribosomal small subunit binding"/>
    <property type="evidence" value="ECO:0007669"/>
    <property type="project" value="TreeGrafter"/>
</dbReference>
<dbReference type="GO" id="GO:0030490">
    <property type="term" value="P:maturation of SSU-rRNA"/>
    <property type="evidence" value="ECO:0007669"/>
    <property type="project" value="UniProtKB-UniRule"/>
</dbReference>
<dbReference type="Gene3D" id="3.30.300.20">
    <property type="match status" value="1"/>
</dbReference>
<dbReference type="HAMAP" id="MF_00003">
    <property type="entry name" value="RbfA"/>
    <property type="match status" value="1"/>
</dbReference>
<dbReference type="InterPro" id="IPR015946">
    <property type="entry name" value="KH_dom-like_a/b"/>
</dbReference>
<dbReference type="InterPro" id="IPR000238">
    <property type="entry name" value="RbfA"/>
</dbReference>
<dbReference type="InterPro" id="IPR023799">
    <property type="entry name" value="RbfA_dom_sf"/>
</dbReference>
<dbReference type="NCBIfam" id="TIGR00082">
    <property type="entry name" value="rbfA"/>
    <property type="match status" value="1"/>
</dbReference>
<dbReference type="PANTHER" id="PTHR33515">
    <property type="entry name" value="RIBOSOME-BINDING FACTOR A, CHLOROPLASTIC-RELATED"/>
    <property type="match status" value="1"/>
</dbReference>
<dbReference type="PANTHER" id="PTHR33515:SF1">
    <property type="entry name" value="RIBOSOME-BINDING FACTOR A, CHLOROPLASTIC-RELATED"/>
    <property type="match status" value="1"/>
</dbReference>
<dbReference type="Pfam" id="PF02033">
    <property type="entry name" value="RBFA"/>
    <property type="match status" value="1"/>
</dbReference>
<dbReference type="SUPFAM" id="SSF89919">
    <property type="entry name" value="Ribosome-binding factor A, RbfA"/>
    <property type="match status" value="1"/>
</dbReference>
<organism>
    <name type="scientific">Pelodictyon phaeoclathratiforme (strain DSM 5477 / BU-1)</name>
    <dbReference type="NCBI Taxonomy" id="324925"/>
    <lineage>
        <taxon>Bacteria</taxon>
        <taxon>Pseudomonadati</taxon>
        <taxon>Chlorobiota</taxon>
        <taxon>Chlorobiia</taxon>
        <taxon>Chlorobiales</taxon>
        <taxon>Chlorobiaceae</taxon>
        <taxon>Chlorobium/Pelodictyon group</taxon>
        <taxon>Pelodictyon</taxon>
    </lineage>
</organism>
<sequence>MSIRTERVASLLQQELGAILQKELPRSGPIITVVEVKITADLSIARAYVSIIGTPEEQQEAMALLQDKTKSIRKILSSKIRHHFRRIPELEFHEDHLYERANRIEQLLSGVRKSSAENV</sequence>